<evidence type="ECO:0000255" key="1">
    <source>
        <dbReference type="HAMAP-Rule" id="MF_01307"/>
    </source>
</evidence>
<evidence type="ECO:0000305" key="2"/>
<reference key="1">
    <citation type="journal article" date="2006" name="Proc. Natl. Acad. Sci. U.S.A.">
        <title>Comparative genomics of the lactic acid bacteria.</title>
        <authorList>
            <person name="Makarova K.S."/>
            <person name="Slesarev A."/>
            <person name="Wolf Y.I."/>
            <person name="Sorokin A."/>
            <person name="Mirkin B."/>
            <person name="Koonin E.V."/>
            <person name="Pavlov A."/>
            <person name="Pavlova N."/>
            <person name="Karamychev V."/>
            <person name="Polouchine N."/>
            <person name="Shakhova V."/>
            <person name="Grigoriev I."/>
            <person name="Lou Y."/>
            <person name="Rohksar D."/>
            <person name="Lucas S."/>
            <person name="Huang K."/>
            <person name="Goodstein D.M."/>
            <person name="Hawkins T."/>
            <person name="Plengvidhya V."/>
            <person name="Welker D."/>
            <person name="Hughes J."/>
            <person name="Goh Y."/>
            <person name="Benson A."/>
            <person name="Baldwin K."/>
            <person name="Lee J.-H."/>
            <person name="Diaz-Muniz I."/>
            <person name="Dosti B."/>
            <person name="Smeianov V."/>
            <person name="Wechter W."/>
            <person name="Barabote R."/>
            <person name="Lorca G."/>
            <person name="Altermann E."/>
            <person name="Barrangou R."/>
            <person name="Ganesan B."/>
            <person name="Xie Y."/>
            <person name="Rawsthorne H."/>
            <person name="Tamir D."/>
            <person name="Parker C."/>
            <person name="Breidt F."/>
            <person name="Broadbent J.R."/>
            <person name="Hutkins R."/>
            <person name="O'Sullivan D."/>
            <person name="Steele J."/>
            <person name="Unlu G."/>
            <person name="Saier M.H. Jr."/>
            <person name="Klaenhammer T."/>
            <person name="Richardson P."/>
            <person name="Kozyavkin S."/>
            <person name="Weimer B.C."/>
            <person name="Mills D.A."/>
        </authorList>
    </citation>
    <scope>NUCLEOTIDE SEQUENCE [LARGE SCALE GENOMIC DNA]</scope>
    <source>
        <strain>ATCC BAA-491 / LMD-9</strain>
    </source>
</reference>
<comment type="function">
    <text evidence="1">With S4 and S12 plays an important role in translational accuracy.</text>
</comment>
<comment type="function">
    <text evidence="1">Located at the back of the 30S subunit body where it stabilizes the conformation of the head with respect to the body.</text>
</comment>
<comment type="subunit">
    <text evidence="1">Part of the 30S ribosomal subunit. Contacts proteins S4 and S8.</text>
</comment>
<comment type="domain">
    <text>The N-terminal domain interacts with the head of the 30S subunit; the C-terminal domain interacts with the body and contacts protein S4. The interaction surface between S4 and S5 is involved in control of translational fidelity.</text>
</comment>
<comment type="similarity">
    <text evidence="1">Belongs to the universal ribosomal protein uS5 family.</text>
</comment>
<name>RS5_STRTD</name>
<dbReference type="EMBL" id="CP000419">
    <property type="protein sequence ID" value="ABJ67004.1"/>
    <property type="molecule type" value="Genomic_DNA"/>
</dbReference>
<dbReference type="RefSeq" id="WP_002946171.1">
    <property type="nucleotide sequence ID" value="NZ_CP086001.1"/>
</dbReference>
<dbReference type="SMR" id="Q03IG8"/>
<dbReference type="GeneID" id="66899645"/>
<dbReference type="KEGG" id="ste:STER_1890"/>
<dbReference type="HOGENOM" id="CLU_065898_2_2_9"/>
<dbReference type="GO" id="GO:0015935">
    <property type="term" value="C:small ribosomal subunit"/>
    <property type="evidence" value="ECO:0007669"/>
    <property type="project" value="InterPro"/>
</dbReference>
<dbReference type="GO" id="GO:0019843">
    <property type="term" value="F:rRNA binding"/>
    <property type="evidence" value="ECO:0007669"/>
    <property type="project" value="UniProtKB-UniRule"/>
</dbReference>
<dbReference type="GO" id="GO:0003735">
    <property type="term" value="F:structural constituent of ribosome"/>
    <property type="evidence" value="ECO:0007669"/>
    <property type="project" value="InterPro"/>
</dbReference>
<dbReference type="GO" id="GO:0006412">
    <property type="term" value="P:translation"/>
    <property type="evidence" value="ECO:0007669"/>
    <property type="project" value="UniProtKB-UniRule"/>
</dbReference>
<dbReference type="FunFam" id="3.30.160.20:FF:000001">
    <property type="entry name" value="30S ribosomal protein S5"/>
    <property type="match status" value="1"/>
</dbReference>
<dbReference type="FunFam" id="3.30.230.10:FF:000002">
    <property type="entry name" value="30S ribosomal protein S5"/>
    <property type="match status" value="1"/>
</dbReference>
<dbReference type="Gene3D" id="3.30.160.20">
    <property type="match status" value="1"/>
</dbReference>
<dbReference type="Gene3D" id="3.30.230.10">
    <property type="match status" value="1"/>
</dbReference>
<dbReference type="HAMAP" id="MF_01307_B">
    <property type="entry name" value="Ribosomal_uS5_B"/>
    <property type="match status" value="1"/>
</dbReference>
<dbReference type="InterPro" id="IPR020568">
    <property type="entry name" value="Ribosomal_Su5_D2-typ_SF"/>
</dbReference>
<dbReference type="InterPro" id="IPR000851">
    <property type="entry name" value="Ribosomal_uS5"/>
</dbReference>
<dbReference type="InterPro" id="IPR005712">
    <property type="entry name" value="Ribosomal_uS5_bac-type"/>
</dbReference>
<dbReference type="InterPro" id="IPR005324">
    <property type="entry name" value="Ribosomal_uS5_C"/>
</dbReference>
<dbReference type="InterPro" id="IPR013810">
    <property type="entry name" value="Ribosomal_uS5_N"/>
</dbReference>
<dbReference type="InterPro" id="IPR018192">
    <property type="entry name" value="Ribosomal_uS5_N_CS"/>
</dbReference>
<dbReference type="InterPro" id="IPR014721">
    <property type="entry name" value="Ribsml_uS5_D2-typ_fold_subgr"/>
</dbReference>
<dbReference type="NCBIfam" id="TIGR01021">
    <property type="entry name" value="rpsE_bact"/>
    <property type="match status" value="1"/>
</dbReference>
<dbReference type="PANTHER" id="PTHR48277">
    <property type="entry name" value="MITOCHONDRIAL RIBOSOMAL PROTEIN S5"/>
    <property type="match status" value="1"/>
</dbReference>
<dbReference type="PANTHER" id="PTHR48277:SF1">
    <property type="entry name" value="MITOCHONDRIAL RIBOSOMAL PROTEIN S5"/>
    <property type="match status" value="1"/>
</dbReference>
<dbReference type="Pfam" id="PF00333">
    <property type="entry name" value="Ribosomal_S5"/>
    <property type="match status" value="1"/>
</dbReference>
<dbReference type="Pfam" id="PF03719">
    <property type="entry name" value="Ribosomal_S5_C"/>
    <property type="match status" value="1"/>
</dbReference>
<dbReference type="SUPFAM" id="SSF54768">
    <property type="entry name" value="dsRNA-binding domain-like"/>
    <property type="match status" value="1"/>
</dbReference>
<dbReference type="SUPFAM" id="SSF54211">
    <property type="entry name" value="Ribosomal protein S5 domain 2-like"/>
    <property type="match status" value="1"/>
</dbReference>
<dbReference type="PROSITE" id="PS00585">
    <property type="entry name" value="RIBOSOMAL_S5"/>
    <property type="match status" value="1"/>
</dbReference>
<dbReference type="PROSITE" id="PS50881">
    <property type="entry name" value="S5_DSRBD"/>
    <property type="match status" value="1"/>
</dbReference>
<gene>
    <name evidence="1" type="primary">rpsE</name>
    <name type="ordered locus">STER_1890</name>
</gene>
<feature type="chain" id="PRO_0000323215" description="Small ribosomal subunit protein uS5">
    <location>
        <begin position="1"/>
        <end position="164"/>
    </location>
</feature>
<feature type="domain" description="S5 DRBM" evidence="1">
    <location>
        <begin position="10"/>
        <end position="73"/>
    </location>
</feature>
<organism>
    <name type="scientific">Streptococcus thermophilus (strain ATCC BAA-491 / LMD-9)</name>
    <dbReference type="NCBI Taxonomy" id="322159"/>
    <lineage>
        <taxon>Bacteria</taxon>
        <taxon>Bacillati</taxon>
        <taxon>Bacillota</taxon>
        <taxon>Bacilli</taxon>
        <taxon>Lactobacillales</taxon>
        <taxon>Streptococcaceae</taxon>
        <taxon>Streptococcus</taxon>
    </lineage>
</organism>
<sequence>MAFKDNAVELEERVVAINRVTKVVKGGRNMRFAALVVVGDRNGRVGFGTGKSQEVPEAIRKAVEAAKKNLIEVPMVGTTIPHEVRSEFGGAKVLLKPAVEGAGVAAGGAVRAVVELAGVADVTSKSLGSNTPINIVRATVEGLKQLKRAEEVAALRGISVSDLA</sequence>
<proteinExistence type="inferred from homology"/>
<protein>
    <recommendedName>
        <fullName evidence="1">Small ribosomal subunit protein uS5</fullName>
    </recommendedName>
    <alternativeName>
        <fullName evidence="2">30S ribosomal protein S5</fullName>
    </alternativeName>
</protein>
<keyword id="KW-0687">Ribonucleoprotein</keyword>
<keyword id="KW-0689">Ribosomal protein</keyword>
<keyword id="KW-0694">RNA-binding</keyword>
<keyword id="KW-0699">rRNA-binding</keyword>
<accession>Q03IG8</accession>